<name>Y7973_BRADU</name>
<evidence type="ECO:0000255" key="1">
    <source>
        <dbReference type="HAMAP-Rule" id="MF_01251"/>
    </source>
</evidence>
<evidence type="ECO:0000255" key="2">
    <source>
        <dbReference type="PROSITE-ProRule" id="PRU01266"/>
    </source>
</evidence>
<evidence type="ECO:0000256" key="3">
    <source>
        <dbReference type="SAM" id="MobiDB-lite"/>
    </source>
</evidence>
<feature type="chain" id="PRO_0000076380" description="UPF0313 protein blr7973">
    <location>
        <begin position="1"/>
        <end position="673"/>
    </location>
</feature>
<feature type="domain" description="Radical SAM core" evidence="2">
    <location>
        <begin position="332"/>
        <end position="611"/>
    </location>
</feature>
<feature type="region of interest" description="Disordered" evidence="3">
    <location>
        <begin position="632"/>
        <end position="673"/>
    </location>
</feature>
<feature type="binding site" evidence="1">
    <location>
        <position position="346"/>
    </location>
    <ligand>
        <name>[4Fe-4S] cluster</name>
        <dbReference type="ChEBI" id="CHEBI:49883"/>
        <note>4Fe-4S-S-AdoMet</note>
    </ligand>
</feature>
<feature type="binding site" evidence="1">
    <location>
        <position position="350"/>
    </location>
    <ligand>
        <name>[4Fe-4S] cluster</name>
        <dbReference type="ChEBI" id="CHEBI:49883"/>
        <note>4Fe-4S-S-AdoMet</note>
    </ligand>
</feature>
<feature type="binding site" evidence="1">
    <location>
        <position position="353"/>
    </location>
    <ligand>
        <name>[4Fe-4S] cluster</name>
        <dbReference type="ChEBI" id="CHEBI:49883"/>
        <note>4Fe-4S-S-AdoMet</note>
    </ligand>
</feature>
<organism>
    <name type="scientific">Bradyrhizobium diazoefficiens (strain JCM 10833 / BCRC 13528 / IAM 13628 / NBRC 14792 / USDA 110)</name>
    <dbReference type="NCBI Taxonomy" id="224911"/>
    <lineage>
        <taxon>Bacteria</taxon>
        <taxon>Pseudomonadati</taxon>
        <taxon>Pseudomonadota</taxon>
        <taxon>Alphaproteobacteria</taxon>
        <taxon>Hyphomicrobiales</taxon>
        <taxon>Nitrobacteraceae</taxon>
        <taxon>Bradyrhizobium</taxon>
    </lineage>
</organism>
<keyword id="KW-0004">4Fe-4S</keyword>
<keyword id="KW-0408">Iron</keyword>
<keyword id="KW-0411">Iron-sulfur</keyword>
<keyword id="KW-0479">Metal-binding</keyword>
<keyword id="KW-1185">Reference proteome</keyword>
<keyword id="KW-0949">S-adenosyl-L-methionine</keyword>
<dbReference type="EMBL" id="BA000040">
    <property type="protein sequence ID" value="BAC53238.1"/>
    <property type="molecule type" value="Genomic_DNA"/>
</dbReference>
<dbReference type="RefSeq" id="NP_774613.1">
    <property type="nucleotide sequence ID" value="NC_004463.1"/>
</dbReference>
<dbReference type="RefSeq" id="WP_011090696.1">
    <property type="nucleotide sequence ID" value="NC_004463.1"/>
</dbReference>
<dbReference type="FunCoup" id="Q89C25">
    <property type="interactions" value="21"/>
</dbReference>
<dbReference type="STRING" id="224911.AAV28_37580"/>
<dbReference type="EnsemblBacteria" id="BAC53238">
    <property type="protein sequence ID" value="BAC53238"/>
    <property type="gene ID" value="BAC53238"/>
</dbReference>
<dbReference type="GeneID" id="46494904"/>
<dbReference type="KEGG" id="bja:blr7973"/>
<dbReference type="PATRIC" id="fig|224911.44.peg.8123"/>
<dbReference type="eggNOG" id="COG1032">
    <property type="taxonomic scope" value="Bacteria"/>
</dbReference>
<dbReference type="HOGENOM" id="CLU_018288_2_0_5"/>
<dbReference type="InParanoid" id="Q89C25"/>
<dbReference type="OrthoDB" id="9803479at2"/>
<dbReference type="PhylomeDB" id="Q89C25"/>
<dbReference type="Proteomes" id="UP000002526">
    <property type="component" value="Chromosome"/>
</dbReference>
<dbReference type="GO" id="GO:0051539">
    <property type="term" value="F:4 iron, 4 sulfur cluster binding"/>
    <property type="evidence" value="ECO:0007669"/>
    <property type="project" value="UniProtKB-KW"/>
</dbReference>
<dbReference type="GO" id="GO:0003824">
    <property type="term" value="F:catalytic activity"/>
    <property type="evidence" value="ECO:0007669"/>
    <property type="project" value="InterPro"/>
</dbReference>
<dbReference type="GO" id="GO:0005506">
    <property type="term" value="F:iron ion binding"/>
    <property type="evidence" value="ECO:0007669"/>
    <property type="project" value="UniProtKB-UniRule"/>
</dbReference>
<dbReference type="Gene3D" id="3.80.30.20">
    <property type="entry name" value="tm_1862 like domain"/>
    <property type="match status" value="1"/>
</dbReference>
<dbReference type="HAMAP" id="MF_01251">
    <property type="entry name" value="UPF0313"/>
    <property type="match status" value="1"/>
</dbReference>
<dbReference type="InterPro" id="IPR006638">
    <property type="entry name" value="Elp3/MiaA/NifB-like_rSAM"/>
</dbReference>
<dbReference type="InterPro" id="IPR020612">
    <property type="entry name" value="Methylthiotransferase_CS"/>
</dbReference>
<dbReference type="InterPro" id="IPR007197">
    <property type="entry name" value="rSAM"/>
</dbReference>
<dbReference type="InterPro" id="IPR023404">
    <property type="entry name" value="rSAM_horseshoe"/>
</dbReference>
<dbReference type="InterPro" id="IPR022946">
    <property type="entry name" value="UPF0313"/>
</dbReference>
<dbReference type="InterPro" id="IPR024560">
    <property type="entry name" value="UPF0313_C"/>
</dbReference>
<dbReference type="InterPro" id="IPR013704">
    <property type="entry name" value="UPF0313_N"/>
</dbReference>
<dbReference type="NCBIfam" id="TIGR03904">
    <property type="entry name" value="SAM_YgiQ"/>
    <property type="match status" value="1"/>
</dbReference>
<dbReference type="PANTHER" id="PTHR32331">
    <property type="entry name" value="UPF0313 PROTEIN YGIQ"/>
    <property type="match status" value="1"/>
</dbReference>
<dbReference type="PANTHER" id="PTHR32331:SF0">
    <property type="entry name" value="UPF0313 PROTEIN YGIQ"/>
    <property type="match status" value="1"/>
</dbReference>
<dbReference type="Pfam" id="PF11842">
    <property type="entry name" value="DUF3362"/>
    <property type="match status" value="1"/>
</dbReference>
<dbReference type="Pfam" id="PF04055">
    <property type="entry name" value="Radical_SAM"/>
    <property type="match status" value="1"/>
</dbReference>
<dbReference type="Pfam" id="PF08497">
    <property type="entry name" value="Radical_SAM_N"/>
    <property type="match status" value="1"/>
</dbReference>
<dbReference type="SFLD" id="SFLDG01082">
    <property type="entry name" value="B12-binding_domain_containing"/>
    <property type="match status" value="1"/>
</dbReference>
<dbReference type="SFLD" id="SFLDS00029">
    <property type="entry name" value="Radical_SAM"/>
    <property type="match status" value="1"/>
</dbReference>
<dbReference type="SFLD" id="SFLDG01069">
    <property type="entry name" value="UPF0313"/>
    <property type="match status" value="1"/>
</dbReference>
<dbReference type="SMART" id="SM00729">
    <property type="entry name" value="Elp3"/>
    <property type="match status" value="1"/>
</dbReference>
<dbReference type="SUPFAM" id="SSF102114">
    <property type="entry name" value="Radical SAM enzymes"/>
    <property type="match status" value="1"/>
</dbReference>
<dbReference type="PROSITE" id="PS51918">
    <property type="entry name" value="RADICAL_SAM"/>
    <property type="match status" value="1"/>
</dbReference>
<proteinExistence type="inferred from homology"/>
<protein>
    <recommendedName>
        <fullName evidence="1">UPF0313 protein blr7973</fullName>
    </recommendedName>
</protein>
<accession>Q89C25</accession>
<sequence length="673" mass="74982">MDTQIIAAEKPLMAQARPRKPAPFLPMSRAEMDALGWDACDIVLVTGDAYVDHPSFGMAIIGRLLEAQGFRVGIIAQPDWHSAEPLRALGKPKVFFGVTGGNMDSMVNRYTADRRLRHDDAYTAGGEGGKRPDRCTIVYAQRCREAFKDVPVVLGGIEASLRRIAHYDYWSDKVRRSVLADAKADLLLYGNAERAVVEVANRLAAGEAPRELDDIRGVALFRRVPEDYSELHADDLDSADEGATRQKGATVIRLPALEQVEQDKEAYARASRVLHRESNPGNARPLVQRHGDRDLWLNPPPIPLTSDEMDAVYDLPYARAPHPSYGDAKIPAWDMIKFSVTIMRGCFGGCTFCSITEHEGRIIQNRSEGSILREIEKIRDKTPGFTGVISDIGGPTANMYRMACKDPKVEGACRRPSCVFPEICPNLNTSHDDLIRLYRKVRETKGIKKVMVASGVRYDLAVESPEYIKELVTHHVGGYLKIAPEHTERGPLDKMMKPGIGAYNQFKRMFDAAAEQAGKKYYLIPYFIAAHPGTTDEDMMNLALWLKKNRYRADQVQTFLPSPMATATAMYHTGVNPLRGVRHGGSDKVEAIKGLRQRRLHKAFLRYHDPDNWPVLREALKAMGRADLIGSRPDQLVPAHQPPGTGKAAGTRRPVRPGGKTQRFTTKGLRVMK</sequence>
<comment type="cofactor">
    <cofactor evidence="1">
        <name>[4Fe-4S] cluster</name>
        <dbReference type="ChEBI" id="CHEBI:49883"/>
    </cofactor>
    <text evidence="1">Binds 1 [4Fe-4S] cluster. The cluster is coordinated with 3 cysteines and an exchangeable S-adenosyl-L-methionine.</text>
</comment>
<comment type="similarity">
    <text evidence="1">Belongs to the UPF0313 family.</text>
</comment>
<gene>
    <name type="ordered locus">blr7973</name>
</gene>
<reference key="1">
    <citation type="journal article" date="2002" name="DNA Res.">
        <title>Complete genomic sequence of nitrogen-fixing symbiotic bacterium Bradyrhizobium japonicum USDA110.</title>
        <authorList>
            <person name="Kaneko T."/>
            <person name="Nakamura Y."/>
            <person name="Sato S."/>
            <person name="Minamisawa K."/>
            <person name="Uchiumi T."/>
            <person name="Sasamoto S."/>
            <person name="Watanabe A."/>
            <person name="Idesawa K."/>
            <person name="Iriguchi M."/>
            <person name="Kawashima K."/>
            <person name="Kohara M."/>
            <person name="Matsumoto M."/>
            <person name="Shimpo S."/>
            <person name="Tsuruoka H."/>
            <person name="Wada T."/>
            <person name="Yamada M."/>
            <person name="Tabata S."/>
        </authorList>
    </citation>
    <scope>NUCLEOTIDE SEQUENCE [LARGE SCALE GENOMIC DNA]</scope>
    <source>
        <strain>JCM 10833 / BCRC 13528 / IAM 13628 / NBRC 14792 / USDA 110</strain>
    </source>
</reference>